<sequence length="112" mass="12590">MAEIQFSKGVAETVVPEVRLSKSKNGQSGMAKFYFLEPTILAKESTDDITGMYLIDDEGEIITREVKGKFINGRPTAIEATVILNSQPEWDRFMRFMERYGAENGLGFSKSE</sequence>
<accession>Q55356</accession>
<name>PSB28_SYNY3</name>
<protein>
    <recommendedName>
        <fullName evidence="1 3">Photosystem II reaction center Psb28 protein</fullName>
    </recommendedName>
    <alternativeName>
        <fullName evidence="1">Photosystem II 13 kDa protein</fullName>
    </alternativeName>
    <alternativeName>
        <fullName evidence="1">Photosystem II reaction center W protein</fullName>
    </alternativeName>
</protein>
<evidence type="ECO:0000255" key="1">
    <source>
        <dbReference type="HAMAP-Rule" id="MF_01370"/>
    </source>
</evidence>
<evidence type="ECO:0000269" key="2">
    <source>
    </source>
</evidence>
<evidence type="ECO:0000303" key="3">
    <source>
    </source>
</evidence>
<evidence type="ECO:0000305" key="4">
    <source>
    </source>
</evidence>
<evidence type="ECO:0007829" key="5">
    <source>
        <dbReference type="PDB" id="2KVO"/>
    </source>
</evidence>
<dbReference type="EMBL" id="D82937">
    <property type="protein sequence ID" value="BAA11641.1"/>
    <property type="molecule type" value="Genomic_DNA"/>
</dbReference>
<dbReference type="EMBL" id="BA000022">
    <property type="protein sequence ID" value="BAA16618.1"/>
    <property type="molecule type" value="Genomic_DNA"/>
</dbReference>
<dbReference type="PIR" id="S74466">
    <property type="entry name" value="S74466"/>
</dbReference>
<dbReference type="PDB" id="2KVO">
    <property type="method" value="NMR"/>
    <property type="chains" value="A=1-112"/>
</dbReference>
<dbReference type="PDBsum" id="2KVO"/>
<dbReference type="BMRB" id="Q55356"/>
<dbReference type="SMR" id="Q55356"/>
<dbReference type="IntAct" id="Q55356">
    <property type="interactions" value="6"/>
</dbReference>
<dbReference type="STRING" id="1148.gene:10497473"/>
<dbReference type="PaxDb" id="1148-1651690"/>
<dbReference type="EnsemblBacteria" id="BAA16618">
    <property type="protein sequence ID" value="BAA16618"/>
    <property type="gene ID" value="BAA16618"/>
</dbReference>
<dbReference type="KEGG" id="syn:sll1398"/>
<dbReference type="eggNOG" id="ENOG5031GDS">
    <property type="taxonomic scope" value="Bacteria"/>
</dbReference>
<dbReference type="InParanoid" id="Q55356"/>
<dbReference type="PhylomeDB" id="Q55356"/>
<dbReference type="BioCyc" id="MetaCyc:PSBW-MONOMER"/>
<dbReference type="EvolutionaryTrace" id="Q55356"/>
<dbReference type="Proteomes" id="UP000001425">
    <property type="component" value="Chromosome"/>
</dbReference>
<dbReference type="GO" id="GO:0009654">
    <property type="term" value="C:photosystem II oxygen evolving complex"/>
    <property type="evidence" value="ECO:0007669"/>
    <property type="project" value="InterPro"/>
</dbReference>
<dbReference type="GO" id="GO:0031676">
    <property type="term" value="C:plasma membrane-derived thylakoid membrane"/>
    <property type="evidence" value="ECO:0007669"/>
    <property type="project" value="UniProtKB-SubCell"/>
</dbReference>
<dbReference type="GO" id="GO:0030096">
    <property type="term" value="C:plasma membrane-derived thylakoid photosystem II"/>
    <property type="evidence" value="ECO:0000314"/>
    <property type="project" value="UniProtKB"/>
</dbReference>
<dbReference type="GO" id="GO:0015979">
    <property type="term" value="P:photosynthesis"/>
    <property type="evidence" value="ECO:0007669"/>
    <property type="project" value="UniProtKB-UniRule"/>
</dbReference>
<dbReference type="Gene3D" id="2.40.30.220">
    <property type="entry name" value="Photosystem II Psb28"/>
    <property type="match status" value="1"/>
</dbReference>
<dbReference type="HAMAP" id="MF_01370">
    <property type="entry name" value="PSII_Psb28"/>
    <property type="match status" value="1"/>
</dbReference>
<dbReference type="InterPro" id="IPR038676">
    <property type="entry name" value="Psb28_c1_sf"/>
</dbReference>
<dbReference type="InterPro" id="IPR005610">
    <property type="entry name" value="PSII_Psb28_class-1"/>
</dbReference>
<dbReference type="NCBIfam" id="TIGR03047">
    <property type="entry name" value="PS_II_psb28"/>
    <property type="match status" value="1"/>
</dbReference>
<dbReference type="PANTHER" id="PTHR34963">
    <property type="match status" value="1"/>
</dbReference>
<dbReference type="PANTHER" id="PTHR34963:SF2">
    <property type="entry name" value="PHOTOSYSTEM II REACTION CENTER PSB28 PROTEIN, CHLOROPLASTIC"/>
    <property type="match status" value="1"/>
</dbReference>
<dbReference type="Pfam" id="PF03912">
    <property type="entry name" value="Psb28"/>
    <property type="match status" value="1"/>
</dbReference>
<comment type="subunit">
    <text evidence="2">Part of the photosystem II complex.</text>
</comment>
<comment type="subcellular location">
    <subcellularLocation>
        <location evidence="2">Cellular thylakoid membrane</location>
        <topology evidence="4">Peripheral membrane protein</topology>
        <orientation evidence="4">Cytoplasmic side</orientation>
    </subcellularLocation>
</comment>
<comment type="similarity">
    <text evidence="1">Belongs to the Psb28 family.</text>
</comment>
<feature type="initiator methionine" description="Removed" evidence="2">
    <location>
        <position position="1"/>
    </location>
</feature>
<feature type="chain" id="PRO_0000217286" description="Photosystem II reaction center Psb28 protein">
    <location>
        <begin position="2"/>
        <end position="112"/>
    </location>
</feature>
<feature type="strand" evidence="5">
    <location>
        <begin position="3"/>
        <end position="9"/>
    </location>
</feature>
<feature type="strand" evidence="5">
    <location>
        <begin position="17"/>
        <end position="22"/>
    </location>
</feature>
<feature type="strand" evidence="5">
    <location>
        <begin position="28"/>
        <end position="37"/>
    </location>
</feature>
<feature type="helix" evidence="5">
    <location>
        <begin position="39"/>
        <end position="41"/>
    </location>
</feature>
<feature type="helix" evidence="5">
    <location>
        <begin position="46"/>
        <end position="48"/>
    </location>
</feature>
<feature type="strand" evidence="5">
    <location>
        <begin position="52"/>
        <end position="55"/>
    </location>
</feature>
<feature type="strand" evidence="5">
    <location>
        <begin position="60"/>
        <end position="63"/>
    </location>
</feature>
<feature type="strand" evidence="5">
    <location>
        <begin position="66"/>
        <end position="71"/>
    </location>
</feature>
<feature type="strand" evidence="5">
    <location>
        <begin position="74"/>
        <end position="84"/>
    </location>
</feature>
<feature type="helix" evidence="5">
    <location>
        <begin position="88"/>
        <end position="103"/>
    </location>
</feature>
<feature type="strand" evidence="5">
    <location>
        <begin position="106"/>
        <end position="108"/>
    </location>
</feature>
<gene>
    <name evidence="1 3" type="primary">psb28</name>
    <name evidence="1" type="synonym">psbW</name>
    <name type="ordered locus">sll1398</name>
</gene>
<keyword id="KW-0002">3D-structure</keyword>
<keyword id="KW-0903">Direct protein sequencing</keyword>
<keyword id="KW-0472">Membrane</keyword>
<keyword id="KW-0602">Photosynthesis</keyword>
<keyword id="KW-0604">Photosystem II</keyword>
<keyword id="KW-1185">Reference proteome</keyword>
<keyword id="KW-0793">Thylakoid</keyword>
<proteinExistence type="evidence at protein level"/>
<reference key="1">
    <citation type="submission" date="1996-02" db="EMBL/GenBank/DDBJ databases">
        <title>Cloning of genes for the 11 kDa and 13 kDa proteins of photosystem II from Synechocystis sp. PCC 6803.</title>
        <authorList>
            <person name="Ikeuchi M."/>
            <person name="Katoh H."/>
        </authorList>
    </citation>
    <scope>NUCLEOTIDE SEQUENCE [GENOMIC DNA]</scope>
</reference>
<reference key="2">
    <citation type="journal article" date="1996" name="DNA Res.">
        <title>Sequence analysis of the genome of the unicellular cyanobacterium Synechocystis sp. strain PCC6803. II. Sequence determination of the entire genome and assignment of potential protein-coding regions.</title>
        <authorList>
            <person name="Kaneko T."/>
            <person name="Sato S."/>
            <person name="Kotani H."/>
            <person name="Tanaka A."/>
            <person name="Asamizu E."/>
            <person name="Nakamura Y."/>
            <person name="Miyajima N."/>
            <person name="Hirosawa M."/>
            <person name="Sugiura M."/>
            <person name="Sasamoto S."/>
            <person name="Kimura T."/>
            <person name="Hosouchi T."/>
            <person name="Matsuno A."/>
            <person name="Muraki A."/>
            <person name="Nakazaki N."/>
            <person name="Naruo K."/>
            <person name="Okumura S."/>
            <person name="Shimpo S."/>
            <person name="Takeuchi C."/>
            <person name="Wada T."/>
            <person name="Watanabe A."/>
            <person name="Yamada M."/>
            <person name="Yasuda M."/>
            <person name="Tabata S."/>
        </authorList>
    </citation>
    <scope>NUCLEOTIDE SEQUENCE [LARGE SCALE GENOMIC DNA]</scope>
    <source>
        <strain>ATCC 27184 / PCC 6803 / Kazusa</strain>
    </source>
</reference>
<reference key="3">
    <citation type="journal article" date="1997" name="Electrophoresis">
        <title>Towards a proteome project of cyanobacterium Synechocystis sp. strain PCC6803: linking 130 protein spots with their respective genes.</title>
        <authorList>
            <person name="Sazuka T."/>
            <person name="Ohara O."/>
        </authorList>
    </citation>
    <scope>PROTEIN SEQUENCE OF 2-20</scope>
</reference>
<reference key="4">
    <citation type="journal article" date="2002" name="Biochemistry">
        <title>Proteomic analysis of a highly active photosystem II preparation from the cyanobacterium Synechocystis sp. PCC 6803 reveals the presence of novel polypeptides.</title>
        <authorList>
            <person name="Kashino Y."/>
            <person name="Lauber W.M."/>
            <person name="Carroll J.A."/>
            <person name="Wang Q."/>
            <person name="Whitmarsh J."/>
            <person name="Satoh K."/>
            <person name="Pakrasi H.B."/>
        </authorList>
    </citation>
    <scope>PROTEIN SEQUENCE OF 2-12</scope>
    <scope>GENE NAME</scope>
    <scope>SUBUNIT</scope>
    <scope>SUBCELLULAR LOCATION</scope>
    <source>
        <strain>ATCC 27184 / PCC 6803 / Kazusa</strain>
    </source>
</reference>
<organism>
    <name type="scientific">Synechocystis sp. (strain ATCC 27184 / PCC 6803 / Kazusa)</name>
    <dbReference type="NCBI Taxonomy" id="1111708"/>
    <lineage>
        <taxon>Bacteria</taxon>
        <taxon>Bacillati</taxon>
        <taxon>Cyanobacteriota</taxon>
        <taxon>Cyanophyceae</taxon>
        <taxon>Synechococcales</taxon>
        <taxon>Merismopediaceae</taxon>
        <taxon>Synechocystis</taxon>
    </lineage>
</organism>